<gene>
    <name type="ordered locus">MJ0906</name>
</gene>
<dbReference type="EMBL" id="L77117">
    <property type="protein sequence ID" value="AAB98916.1"/>
    <property type="molecule type" value="Genomic_DNA"/>
</dbReference>
<dbReference type="PIR" id="B64413">
    <property type="entry name" value="B64413"/>
</dbReference>
<dbReference type="RefSeq" id="WP_010870420.1">
    <property type="nucleotide sequence ID" value="NC_000909.1"/>
</dbReference>
<dbReference type="SMR" id="Q58316"/>
<dbReference type="STRING" id="243232.MJ_0906"/>
<dbReference type="PaxDb" id="243232-MJ_0906"/>
<dbReference type="EnsemblBacteria" id="AAB98916">
    <property type="protein sequence ID" value="AAB98916"/>
    <property type="gene ID" value="MJ_0906"/>
</dbReference>
<dbReference type="GeneID" id="1451795"/>
<dbReference type="KEGG" id="mja:MJ_0906"/>
<dbReference type="eggNOG" id="arCOG05058">
    <property type="taxonomic scope" value="Archaea"/>
</dbReference>
<dbReference type="HOGENOM" id="CLU_052780_0_0_2"/>
<dbReference type="InParanoid" id="Q58316"/>
<dbReference type="OrthoDB" id="182741at2157"/>
<dbReference type="PhylomeDB" id="Q58316"/>
<dbReference type="Proteomes" id="UP000000805">
    <property type="component" value="Chromosome"/>
</dbReference>
<dbReference type="GO" id="GO:0008168">
    <property type="term" value="F:methyltransferase activity"/>
    <property type="evidence" value="ECO:0000318"/>
    <property type="project" value="GO_Central"/>
</dbReference>
<dbReference type="CDD" id="cd02440">
    <property type="entry name" value="AdoMet_MTases"/>
    <property type="match status" value="1"/>
</dbReference>
<dbReference type="Gene3D" id="3.40.50.150">
    <property type="entry name" value="Vaccinia Virus protein VP39"/>
    <property type="match status" value="1"/>
</dbReference>
<dbReference type="InterPro" id="IPR025714">
    <property type="entry name" value="Methyltranfer_dom"/>
</dbReference>
<dbReference type="InterPro" id="IPR029063">
    <property type="entry name" value="SAM-dependent_MTases_sf"/>
</dbReference>
<dbReference type="PANTHER" id="PTHR43861:SF1">
    <property type="entry name" value="TRANS-ACONITATE 2-METHYLTRANSFERASE"/>
    <property type="match status" value="1"/>
</dbReference>
<dbReference type="PANTHER" id="PTHR43861">
    <property type="entry name" value="TRANS-ACONITATE 2-METHYLTRANSFERASE-RELATED"/>
    <property type="match status" value="1"/>
</dbReference>
<dbReference type="Pfam" id="PF13847">
    <property type="entry name" value="Methyltransf_31"/>
    <property type="match status" value="1"/>
</dbReference>
<dbReference type="SUPFAM" id="SSF53335">
    <property type="entry name" value="S-adenosyl-L-methionine-dependent methyltransferases"/>
    <property type="match status" value="1"/>
</dbReference>
<reference key="1">
    <citation type="journal article" date="1996" name="Science">
        <title>Complete genome sequence of the methanogenic archaeon, Methanococcus jannaschii.</title>
        <authorList>
            <person name="Bult C.J."/>
            <person name="White O."/>
            <person name="Olsen G.J."/>
            <person name="Zhou L."/>
            <person name="Fleischmann R.D."/>
            <person name="Sutton G.G."/>
            <person name="Blake J.A."/>
            <person name="FitzGerald L.M."/>
            <person name="Clayton R.A."/>
            <person name="Gocayne J.D."/>
            <person name="Kerlavage A.R."/>
            <person name="Dougherty B.A."/>
            <person name="Tomb J.-F."/>
            <person name="Adams M.D."/>
            <person name="Reich C.I."/>
            <person name="Overbeek R."/>
            <person name="Kirkness E.F."/>
            <person name="Weinstock K.G."/>
            <person name="Merrick J.M."/>
            <person name="Glodek A."/>
            <person name="Scott J.L."/>
            <person name="Geoghagen N.S.M."/>
            <person name="Weidman J.F."/>
            <person name="Fuhrmann J.L."/>
            <person name="Nguyen D."/>
            <person name="Utterback T.R."/>
            <person name="Kelley J.M."/>
            <person name="Peterson J.D."/>
            <person name="Sadow P.W."/>
            <person name="Hanna M.C."/>
            <person name="Cotton M.D."/>
            <person name="Roberts K.M."/>
            <person name="Hurst M.A."/>
            <person name="Kaine B.P."/>
            <person name="Borodovsky M."/>
            <person name="Klenk H.-P."/>
            <person name="Fraser C.M."/>
            <person name="Smith H.O."/>
            <person name="Woese C.R."/>
            <person name="Venter J.C."/>
        </authorList>
    </citation>
    <scope>NUCLEOTIDE SEQUENCE [LARGE SCALE GENOMIC DNA]</scope>
    <source>
        <strain>ATCC 43067 / DSM 2661 / JAL-1 / JCM 10045 / NBRC 100440</strain>
    </source>
</reference>
<organism>
    <name type="scientific">Methanocaldococcus jannaschii (strain ATCC 43067 / DSM 2661 / JAL-1 / JCM 10045 / NBRC 100440)</name>
    <name type="common">Methanococcus jannaschii</name>
    <dbReference type="NCBI Taxonomy" id="243232"/>
    <lineage>
        <taxon>Archaea</taxon>
        <taxon>Methanobacteriati</taxon>
        <taxon>Methanobacteriota</taxon>
        <taxon>Methanomada group</taxon>
        <taxon>Methanococci</taxon>
        <taxon>Methanococcales</taxon>
        <taxon>Methanocaldococcaceae</taxon>
        <taxon>Methanocaldococcus</taxon>
    </lineage>
</organism>
<proteinExistence type="predicted"/>
<feature type="chain" id="PRO_0000107098" description="Uncharacterized protein MJ0906">
    <location>
        <begin position="1"/>
        <end position="366"/>
    </location>
</feature>
<protein>
    <recommendedName>
        <fullName>Uncharacterized protein MJ0906</fullName>
    </recommendedName>
</protein>
<accession>Q58316</accession>
<keyword id="KW-1185">Reference proteome</keyword>
<name>Y906_METJA</name>
<sequence>MKFDSAKIENVVGGGSFEIGDDDSKILDEIISEVINDIMPSEIKLKKKIEMIDNTIEYLSYELLVTFIKHGVEFGIFPIIAKYSPKIDDIPLLVKYPNKQFILDYIKTALKLEILKYEDEKIKINEDFELNIKMPKFDKIISDYVMKYNFITHVSRYALISYSHPKIAISFKKDPDIWDMILSSPYYSLCREIASDYLKIDKGDYILDVGCGSRSPKYFIDMIYPEGHYMGVDISKGLLQIAECRIKRLYCDSYELKNIDFTKIIPKEKYDYIICSHTMIYAPSLKQFLNKMMSSIHSGGKIFISEEFILDKNENICKEVFEFYNRLNKRFRGYYSEKDIVDILESLGYDFKIESLGNGILVIEKI</sequence>